<comment type="function">
    <text evidence="5">Catalyzes the oxidation of methanol to formaldehyde and hydrogen peroxide, the first step in the methanol utilization pathway of methylotrophic yeasts.</text>
</comment>
<comment type="catalytic activity">
    <reaction>
        <text>a primary alcohol + O2 = an aldehyde + H2O2</text>
        <dbReference type="Rhea" id="RHEA:19829"/>
        <dbReference type="ChEBI" id="CHEBI:15379"/>
        <dbReference type="ChEBI" id="CHEBI:15734"/>
        <dbReference type="ChEBI" id="CHEBI:16240"/>
        <dbReference type="ChEBI" id="CHEBI:17478"/>
        <dbReference type="EC" id="1.1.3.13"/>
    </reaction>
</comment>
<comment type="cofactor">
    <cofactor>
        <name>FAD</name>
        <dbReference type="ChEBI" id="CHEBI:57692"/>
    </cofactor>
</comment>
<comment type="pathway">
    <text>Energy metabolism; methane degradation.</text>
</comment>
<comment type="subunit">
    <text evidence="4">Homooctamer.</text>
</comment>
<comment type="subcellular location">
    <subcellularLocation>
        <location evidence="4">Peroxisome matrix</location>
    </subcellularLocation>
</comment>
<comment type="induction">
    <text evidence="1">Induced by methanol. Subject to strong carbon catabolite repression (By similarity).</text>
</comment>
<comment type="domain">
    <text evidence="1">The C-terminal peroxisomal targeting signal (PTS) is essential for the efficient targeting and import of AOX into peroxisomes via the PTS1 pathway.</text>
</comment>
<comment type="similarity">
    <text evidence="6">Belongs to the GMC oxidoreductase family.</text>
</comment>
<dbReference type="EC" id="1.1.3.13"/>
<dbReference type="EMBL" id="M81702">
    <property type="protein sequence ID" value="AAA34321.1"/>
    <property type="molecule type" value="Genomic_DNA"/>
</dbReference>
<dbReference type="PIR" id="JC1117">
    <property type="entry name" value="JC1117"/>
</dbReference>
<dbReference type="SMR" id="Q00922"/>
<dbReference type="CAZy" id="AA3">
    <property type="family name" value="Auxiliary Activities 3"/>
</dbReference>
<dbReference type="BioCyc" id="MetaCyc:MONOMER-13165"/>
<dbReference type="BRENDA" id="1.1.3.13">
    <property type="organism ID" value="1100"/>
</dbReference>
<dbReference type="UniPathway" id="UPA00147"/>
<dbReference type="GO" id="GO:0005782">
    <property type="term" value="C:peroxisomal matrix"/>
    <property type="evidence" value="ECO:0007669"/>
    <property type="project" value="UniProtKB-SubCell"/>
</dbReference>
<dbReference type="GO" id="GO:0047639">
    <property type="term" value="F:alcohol oxidase activity"/>
    <property type="evidence" value="ECO:0007669"/>
    <property type="project" value="UniProtKB-EC"/>
</dbReference>
<dbReference type="GO" id="GO:0050660">
    <property type="term" value="F:flavin adenine dinucleotide binding"/>
    <property type="evidence" value="ECO:0007669"/>
    <property type="project" value="InterPro"/>
</dbReference>
<dbReference type="GO" id="GO:0046188">
    <property type="term" value="P:methane catabolic process"/>
    <property type="evidence" value="ECO:0007669"/>
    <property type="project" value="UniProtKB-UniPathway"/>
</dbReference>
<dbReference type="GO" id="GO:0015945">
    <property type="term" value="P:methanol metabolic process"/>
    <property type="evidence" value="ECO:0007669"/>
    <property type="project" value="UniProtKB-KW"/>
</dbReference>
<dbReference type="Gene3D" id="3.50.50.60">
    <property type="entry name" value="FAD/NAD(P)-binding domain"/>
    <property type="match status" value="2"/>
</dbReference>
<dbReference type="Gene3D" id="3.30.560.10">
    <property type="entry name" value="Glucose Oxidase, domain 3"/>
    <property type="match status" value="1"/>
</dbReference>
<dbReference type="InterPro" id="IPR036188">
    <property type="entry name" value="FAD/NAD-bd_sf"/>
</dbReference>
<dbReference type="InterPro" id="IPR012132">
    <property type="entry name" value="GMC_OxRdtase"/>
</dbReference>
<dbReference type="InterPro" id="IPR000172">
    <property type="entry name" value="GMC_OxRdtase_N"/>
</dbReference>
<dbReference type="InterPro" id="IPR007867">
    <property type="entry name" value="GMC_OxRtase_C"/>
</dbReference>
<dbReference type="PANTHER" id="PTHR11552">
    <property type="entry name" value="GLUCOSE-METHANOL-CHOLINE GMC OXIDOREDUCTASE"/>
    <property type="match status" value="1"/>
</dbReference>
<dbReference type="PANTHER" id="PTHR11552:SF78">
    <property type="entry name" value="GLUCOSE-METHANOL-CHOLINE OXIDOREDUCTASE N-TERMINAL DOMAIN-CONTAINING PROTEIN"/>
    <property type="match status" value="1"/>
</dbReference>
<dbReference type="Pfam" id="PF05199">
    <property type="entry name" value="GMC_oxred_C"/>
    <property type="match status" value="1"/>
</dbReference>
<dbReference type="Pfam" id="PF00732">
    <property type="entry name" value="GMC_oxred_N"/>
    <property type="match status" value="1"/>
</dbReference>
<dbReference type="PIRSF" id="PIRSF000137">
    <property type="entry name" value="Alcohol_oxidase"/>
    <property type="match status" value="1"/>
</dbReference>
<dbReference type="SUPFAM" id="SSF54373">
    <property type="entry name" value="FAD-linked reductases, C-terminal domain"/>
    <property type="match status" value="1"/>
</dbReference>
<dbReference type="SUPFAM" id="SSF51905">
    <property type="entry name" value="FAD/NAD(P)-binding domain"/>
    <property type="match status" value="1"/>
</dbReference>
<dbReference type="PROSITE" id="PS00623">
    <property type="entry name" value="GMC_OXRED_1"/>
    <property type="match status" value="1"/>
</dbReference>
<dbReference type="PROSITE" id="PS00624">
    <property type="entry name" value="GMC_OXRED_2"/>
    <property type="match status" value="1"/>
</dbReference>
<organism>
    <name type="scientific">Candida boidinii</name>
    <name type="common">Yeast</name>
    <dbReference type="NCBI Taxonomy" id="5477"/>
    <lineage>
        <taxon>Eukaryota</taxon>
        <taxon>Fungi</taxon>
        <taxon>Dikarya</taxon>
        <taxon>Ascomycota</taxon>
        <taxon>Saccharomycotina</taxon>
        <taxon>Pichiomycetes</taxon>
        <taxon>Pichiales</taxon>
        <taxon>Pichiaceae</taxon>
        <taxon>Ogataea</taxon>
        <taxon>Ogataea/Candida clade</taxon>
    </lineage>
</organism>
<feature type="initiator methionine" description="Removed" evidence="5">
    <location>
        <position position="1"/>
    </location>
</feature>
<feature type="chain" id="PRO_0000205580" description="Alcohol oxidase">
    <location>
        <begin position="2"/>
        <end position="663"/>
    </location>
</feature>
<feature type="short sequence motif" description="Microbody targeting signal" evidence="3">
    <location>
        <begin position="661"/>
        <end position="663"/>
    </location>
</feature>
<feature type="active site" description="Proton acceptor" evidence="2">
    <location>
        <position position="567"/>
    </location>
</feature>
<feature type="binding site" evidence="1">
    <location>
        <begin position="8"/>
        <end position="39"/>
    </location>
    <ligand>
        <name>FAD</name>
        <dbReference type="ChEBI" id="CHEBI:57692"/>
    </ligand>
</feature>
<gene>
    <name type="primary">AOD1</name>
</gene>
<keyword id="KW-0903">Direct protein sequencing</keyword>
<keyword id="KW-0274">FAD</keyword>
<keyword id="KW-0285">Flavoprotein</keyword>
<keyword id="KW-0485">Methanol utilization</keyword>
<keyword id="KW-0560">Oxidoreductase</keyword>
<keyword id="KW-0576">Peroxisome</keyword>
<name>ALOX_CANBO</name>
<proteinExistence type="evidence at protein level"/>
<evidence type="ECO:0000250" key="1"/>
<evidence type="ECO:0000250" key="2">
    <source>
        <dbReference type="UniProtKB" id="E4QP00"/>
    </source>
</evidence>
<evidence type="ECO:0000255" key="3"/>
<evidence type="ECO:0000269" key="4">
    <source>
    </source>
</evidence>
<evidence type="ECO:0000269" key="5">
    <source>
    </source>
</evidence>
<evidence type="ECO:0000305" key="6"/>
<accession>Q00922</accession>
<sequence length="663" mass="74082">MAIPEEFDVIVCGGGSTGCVIAGRLANVDENLKVLLIENGENNLNNPWVYLPGIYPRNMRLDSKTATFYNSRPSKHLNGRRAIVPQANILGGGSSINFMMYTRASASDYDDWESEGWTTDELLPLMKKFETYQRPCNNRDVHGFDGPIKVSFGNYTYPQCQDFLRACETQGIPYVDDLEDLKTSHGAEQWLKWINRDFGRRSDTAHAFIHSTMRNKENLFLMTNTKVDKVIIEDGRAVAVRTVPSKPIGDSKVSRTFKARKQIVVSCGTVSSPMVLQRSGIGEPSKLRAAGVKPIVELPGVGRNFQDHFCYFVPYRIKQDSESFDAFVSGDKEAQKSAFDQWYATGAGPLATNGIEAGVKIRPTEAELATADKAFQQGWESYFENKPDKPLMHYSVISGFFGDHTRLPPGKYMTMFHFLEYPFSRGWLHISSDDPYAAPDFDPGFMNDDRDMWPMVWAFKKSRETARRMECFAGEPTAFHPHYKVDSPARALEQSAEDTKKVAGPLHLTANLYHGSWSTPIGEADKHDPNHVTSSHINVYSKDIQYTKEDDEAIENYIKEHAETTWHCLGTNSMAPREGNKNAPEGGVLDPRLNVHGVKGLKVADLSVCPDNVGCNTFSTALTIGEKAAVLVAEDLGYSGSELDMEVPQHKLKTYEQTGAARY</sequence>
<protein>
    <recommendedName>
        <fullName>Alcohol oxidase</fullName>
        <shortName>AO</shortName>
        <shortName>AOX</shortName>
        <ecNumber>1.1.3.13</ecNumber>
    </recommendedName>
    <alternativeName>
        <fullName>Methanol oxidase</fullName>
        <shortName>MOX</shortName>
    </alternativeName>
</protein>
<reference key="1">
    <citation type="journal article" date="1992" name="Gene">
        <title>Cloning and sequencing of the alcohol oxidase-encoding gene (AOD1) from the formaldehyde-producing asporogeneous methylotrophic yeast, Candida boidinii S2.</title>
        <authorList>
            <person name="Sakai Y."/>
            <person name="Tani Y."/>
        </authorList>
    </citation>
    <scope>NUCLEOTIDE SEQUENCE [GENOMIC DNA]</scope>
    <scope>PROTEIN SEQUENCE OF 2-11; 13-18 AND 20-35</scope>
    <scope>FUNCTION</scope>
    <source>
        <strain>S2</strain>
    </source>
</reference>
<reference key="2">
    <citation type="journal article" date="2001" name="J. Cell Sci.">
        <title>Alcohol oxidase and dihydroxyacetone synthase, the abundant peroxisomal proteins of methylotrophic yeasts, assemble in different cellular compartments.</title>
        <authorList>
            <person name="Stewart M.Q."/>
            <person name="Esposito R.D."/>
            <person name="Gowani J."/>
            <person name="Goodman J.M."/>
        </authorList>
    </citation>
    <scope>SUBCELLULAR LOCATION</scope>
    <scope>SUBUNIT</scope>
</reference>